<gene>
    <name evidence="1" type="primary">fmt</name>
    <name type="ordered locus">PputGB1_0083</name>
</gene>
<dbReference type="EC" id="2.1.2.9" evidence="1"/>
<dbReference type="EMBL" id="CP000926">
    <property type="protein sequence ID" value="ABY95999.1"/>
    <property type="molecule type" value="Genomic_DNA"/>
</dbReference>
<dbReference type="RefSeq" id="WP_012269875.1">
    <property type="nucleotide sequence ID" value="NC_010322.1"/>
</dbReference>
<dbReference type="SMR" id="B0KF29"/>
<dbReference type="KEGG" id="ppg:PputGB1_0083"/>
<dbReference type="eggNOG" id="COG0223">
    <property type="taxonomic scope" value="Bacteria"/>
</dbReference>
<dbReference type="HOGENOM" id="CLU_033347_1_2_6"/>
<dbReference type="Proteomes" id="UP000002157">
    <property type="component" value="Chromosome"/>
</dbReference>
<dbReference type="GO" id="GO:0005829">
    <property type="term" value="C:cytosol"/>
    <property type="evidence" value="ECO:0007669"/>
    <property type="project" value="TreeGrafter"/>
</dbReference>
<dbReference type="GO" id="GO:0004479">
    <property type="term" value="F:methionyl-tRNA formyltransferase activity"/>
    <property type="evidence" value="ECO:0007669"/>
    <property type="project" value="UniProtKB-UniRule"/>
</dbReference>
<dbReference type="CDD" id="cd08646">
    <property type="entry name" value="FMT_core_Met-tRNA-FMT_N"/>
    <property type="match status" value="1"/>
</dbReference>
<dbReference type="CDD" id="cd08704">
    <property type="entry name" value="Met_tRNA_FMT_C"/>
    <property type="match status" value="1"/>
</dbReference>
<dbReference type="FunFam" id="3.40.50.170:FF:000003">
    <property type="entry name" value="Methionyl-tRNA formyltransferase"/>
    <property type="match status" value="1"/>
</dbReference>
<dbReference type="Gene3D" id="3.10.25.10">
    <property type="entry name" value="Formyl transferase, C-terminal domain"/>
    <property type="match status" value="1"/>
</dbReference>
<dbReference type="Gene3D" id="3.40.50.170">
    <property type="entry name" value="Formyl transferase, N-terminal domain"/>
    <property type="match status" value="1"/>
</dbReference>
<dbReference type="HAMAP" id="MF_00182">
    <property type="entry name" value="Formyl_trans"/>
    <property type="match status" value="1"/>
</dbReference>
<dbReference type="InterPro" id="IPR005794">
    <property type="entry name" value="Fmt"/>
</dbReference>
<dbReference type="InterPro" id="IPR005793">
    <property type="entry name" value="Formyl_trans_C"/>
</dbReference>
<dbReference type="InterPro" id="IPR037022">
    <property type="entry name" value="Formyl_trans_C_sf"/>
</dbReference>
<dbReference type="InterPro" id="IPR002376">
    <property type="entry name" value="Formyl_transf_N"/>
</dbReference>
<dbReference type="InterPro" id="IPR036477">
    <property type="entry name" value="Formyl_transf_N_sf"/>
</dbReference>
<dbReference type="InterPro" id="IPR011034">
    <property type="entry name" value="Formyl_transferase-like_C_sf"/>
</dbReference>
<dbReference type="InterPro" id="IPR001555">
    <property type="entry name" value="GART_AS"/>
</dbReference>
<dbReference type="InterPro" id="IPR044135">
    <property type="entry name" value="Met-tRNA-FMT_C"/>
</dbReference>
<dbReference type="InterPro" id="IPR041711">
    <property type="entry name" value="Met-tRNA-FMT_N"/>
</dbReference>
<dbReference type="NCBIfam" id="TIGR00460">
    <property type="entry name" value="fmt"/>
    <property type="match status" value="1"/>
</dbReference>
<dbReference type="PANTHER" id="PTHR11138">
    <property type="entry name" value="METHIONYL-TRNA FORMYLTRANSFERASE"/>
    <property type="match status" value="1"/>
</dbReference>
<dbReference type="PANTHER" id="PTHR11138:SF5">
    <property type="entry name" value="METHIONYL-TRNA FORMYLTRANSFERASE, MITOCHONDRIAL"/>
    <property type="match status" value="1"/>
</dbReference>
<dbReference type="Pfam" id="PF02911">
    <property type="entry name" value="Formyl_trans_C"/>
    <property type="match status" value="1"/>
</dbReference>
<dbReference type="Pfam" id="PF00551">
    <property type="entry name" value="Formyl_trans_N"/>
    <property type="match status" value="1"/>
</dbReference>
<dbReference type="SUPFAM" id="SSF50486">
    <property type="entry name" value="FMT C-terminal domain-like"/>
    <property type="match status" value="1"/>
</dbReference>
<dbReference type="SUPFAM" id="SSF53328">
    <property type="entry name" value="Formyltransferase"/>
    <property type="match status" value="1"/>
</dbReference>
<dbReference type="PROSITE" id="PS00373">
    <property type="entry name" value="GART"/>
    <property type="match status" value="1"/>
</dbReference>
<evidence type="ECO:0000255" key="1">
    <source>
        <dbReference type="HAMAP-Rule" id="MF_00182"/>
    </source>
</evidence>
<name>FMT_PSEPG</name>
<comment type="function">
    <text evidence="1">Attaches a formyl group to the free amino group of methionyl-tRNA(fMet). The formyl group appears to play a dual role in the initiator identity of N-formylmethionyl-tRNA by promoting its recognition by IF2 and preventing the misappropriation of this tRNA by the elongation apparatus.</text>
</comment>
<comment type="catalytic activity">
    <reaction evidence="1">
        <text>L-methionyl-tRNA(fMet) + (6R)-10-formyltetrahydrofolate = N-formyl-L-methionyl-tRNA(fMet) + (6S)-5,6,7,8-tetrahydrofolate + H(+)</text>
        <dbReference type="Rhea" id="RHEA:24380"/>
        <dbReference type="Rhea" id="RHEA-COMP:9952"/>
        <dbReference type="Rhea" id="RHEA-COMP:9953"/>
        <dbReference type="ChEBI" id="CHEBI:15378"/>
        <dbReference type="ChEBI" id="CHEBI:57453"/>
        <dbReference type="ChEBI" id="CHEBI:78530"/>
        <dbReference type="ChEBI" id="CHEBI:78844"/>
        <dbReference type="ChEBI" id="CHEBI:195366"/>
        <dbReference type="EC" id="2.1.2.9"/>
    </reaction>
</comment>
<comment type="similarity">
    <text evidence="1">Belongs to the Fmt family.</text>
</comment>
<proteinExistence type="inferred from homology"/>
<accession>B0KF29</accession>
<reference key="1">
    <citation type="submission" date="2008-01" db="EMBL/GenBank/DDBJ databases">
        <title>Complete sequence of Pseudomonas putida GB-1.</title>
        <authorList>
            <consortium name="US DOE Joint Genome Institute"/>
            <person name="Copeland A."/>
            <person name="Lucas S."/>
            <person name="Lapidus A."/>
            <person name="Barry K."/>
            <person name="Glavina del Rio T."/>
            <person name="Dalin E."/>
            <person name="Tice H."/>
            <person name="Pitluck S."/>
            <person name="Bruce D."/>
            <person name="Goodwin L."/>
            <person name="Chertkov O."/>
            <person name="Brettin T."/>
            <person name="Detter J.C."/>
            <person name="Han C."/>
            <person name="Kuske C.R."/>
            <person name="Schmutz J."/>
            <person name="Larimer F."/>
            <person name="Land M."/>
            <person name="Hauser L."/>
            <person name="Kyrpides N."/>
            <person name="Kim E."/>
            <person name="McCarthy J.K."/>
            <person name="Richardson P."/>
        </authorList>
    </citation>
    <scope>NUCLEOTIDE SEQUENCE [LARGE SCALE GENOMIC DNA]</scope>
    <source>
        <strain>GB-1</strain>
    </source>
</reference>
<feature type="chain" id="PRO_1000077312" description="Methionyl-tRNA formyltransferase">
    <location>
        <begin position="1"/>
        <end position="310"/>
    </location>
</feature>
<feature type="binding site" evidence="1">
    <location>
        <begin position="109"/>
        <end position="112"/>
    </location>
    <ligand>
        <name>(6S)-5,6,7,8-tetrahydrofolate</name>
        <dbReference type="ChEBI" id="CHEBI:57453"/>
    </ligand>
</feature>
<organism>
    <name type="scientific">Pseudomonas putida (strain GB-1)</name>
    <dbReference type="NCBI Taxonomy" id="76869"/>
    <lineage>
        <taxon>Bacteria</taxon>
        <taxon>Pseudomonadati</taxon>
        <taxon>Pseudomonadota</taxon>
        <taxon>Gammaproteobacteria</taxon>
        <taxon>Pseudomonadales</taxon>
        <taxon>Pseudomonadaceae</taxon>
        <taxon>Pseudomonas</taxon>
    </lineage>
</organism>
<protein>
    <recommendedName>
        <fullName evidence="1">Methionyl-tRNA formyltransferase</fullName>
        <ecNumber evidence="1">2.1.2.9</ecNumber>
    </recommendedName>
</protein>
<keyword id="KW-0648">Protein biosynthesis</keyword>
<keyword id="KW-0808">Transferase</keyword>
<sequence>MRIVFAGTPEFAAEHLKALLDSPYEIVAVYTQPDRPAGRGQKLMPSAVKALAVAHDIPVFQPQTLRNADAQAELAALKPDLMVVVAYGLILPQAVLDIPRLGCINSHASLLPRWRGAAPIQRAVEAGDAESGVTVMRMEAGLDTGPMLLKVVTPISADDTGGTLHDRLAEMGPPAVVQAIAGLADGSLQGEVQDDALATYAHKLNKDEARIDWSRPAVELERLIRAFNPWPVCHSTLDGESVKVLAANLSTGKGAPGEILSASKDGLVVACGDQALSLTRLQLPGGKALSFSDLFNSRREKFAAGKVLGQ</sequence>